<sequence>MRLMTKLGFRALVASCLIAAGGAANAQVNVLITGVGSTQFPIATANFANEAGLPQQVTSIVRADLARSGKFTNIDAGSTPVPETASVDLGAWKAKGANAFVAGSVNREANGQYKVNFILYDTVKQQSLGGLSLTATDTTLRTAGHKIADYIYQKLLGVRGVFATRLSYVIKTGNRYQLQISDSDGQNARIALSSTEPIISPAWSPSGTKVAYVSFERKKPIVYIHDLPTGRRYMVSDQKGNNSAPAWSPDSNTLAVALSLTGNTQIYTVNANGGGLRRLTQSSSIDTEPYYSPDGRWIYFTSDRGGAPQIYRMPAQGESAGAAQRVTFTGSYNTSPRISPDGKLLAYISRTGGGFKLYVQDLQTGAANAITNTNRDESPSFAANGQYLLYATQSGGRNVLAAVPSDGSAPPQILSVQGGSVREPSWGPFMQ</sequence>
<keyword id="KW-0131">Cell cycle</keyword>
<keyword id="KW-0132">Cell division</keyword>
<keyword id="KW-0574">Periplasm</keyword>
<keyword id="KW-0732">Signal</keyword>
<organism>
    <name type="scientific">Burkholderia ambifaria (strain MC40-6)</name>
    <dbReference type="NCBI Taxonomy" id="398577"/>
    <lineage>
        <taxon>Bacteria</taxon>
        <taxon>Pseudomonadati</taxon>
        <taxon>Pseudomonadota</taxon>
        <taxon>Betaproteobacteria</taxon>
        <taxon>Burkholderiales</taxon>
        <taxon>Burkholderiaceae</taxon>
        <taxon>Burkholderia</taxon>
        <taxon>Burkholderia cepacia complex</taxon>
    </lineage>
</organism>
<gene>
    <name evidence="1" type="primary">tolB</name>
    <name type="ordered locus">BamMC406_0694</name>
</gene>
<protein>
    <recommendedName>
        <fullName evidence="1">Tol-Pal system protein TolB</fullName>
    </recommendedName>
</protein>
<feature type="signal peptide" evidence="1">
    <location>
        <begin position="1"/>
        <end position="26"/>
    </location>
</feature>
<feature type="chain" id="PRO_5000333134" description="Tol-Pal system protein TolB" evidence="1">
    <location>
        <begin position="27"/>
        <end position="431"/>
    </location>
</feature>
<feature type="region of interest" description="Disordered" evidence="2">
    <location>
        <begin position="411"/>
        <end position="431"/>
    </location>
</feature>
<accession>B1YTW7</accession>
<comment type="function">
    <text evidence="1">Part of the Tol-Pal system, which plays a role in outer membrane invagination during cell division and is important for maintaining outer membrane integrity.</text>
</comment>
<comment type="subunit">
    <text evidence="1">The Tol-Pal system is composed of five core proteins: the inner membrane proteins TolA, TolQ and TolR, the periplasmic protein TolB and the outer membrane protein Pal. They form a network linking the inner and outer membranes and the peptidoglycan layer.</text>
</comment>
<comment type="subcellular location">
    <subcellularLocation>
        <location evidence="1">Periplasm</location>
    </subcellularLocation>
</comment>
<comment type="similarity">
    <text evidence="1">Belongs to the TolB family.</text>
</comment>
<evidence type="ECO:0000255" key="1">
    <source>
        <dbReference type="HAMAP-Rule" id="MF_00671"/>
    </source>
</evidence>
<evidence type="ECO:0000256" key="2">
    <source>
        <dbReference type="SAM" id="MobiDB-lite"/>
    </source>
</evidence>
<name>TOLB_BURA4</name>
<dbReference type="EMBL" id="CP001025">
    <property type="protein sequence ID" value="ACB63190.1"/>
    <property type="molecule type" value="Genomic_DNA"/>
</dbReference>
<dbReference type="RefSeq" id="WP_006753269.1">
    <property type="nucleotide sequence ID" value="NC_010551.1"/>
</dbReference>
<dbReference type="SMR" id="B1YTW7"/>
<dbReference type="KEGG" id="bac:BamMC406_0694"/>
<dbReference type="HOGENOM" id="CLU_047123_0_0_4"/>
<dbReference type="OrthoDB" id="9802240at2"/>
<dbReference type="Proteomes" id="UP000001680">
    <property type="component" value="Chromosome 1"/>
</dbReference>
<dbReference type="GO" id="GO:0042597">
    <property type="term" value="C:periplasmic space"/>
    <property type="evidence" value="ECO:0007669"/>
    <property type="project" value="UniProtKB-SubCell"/>
</dbReference>
<dbReference type="GO" id="GO:0051301">
    <property type="term" value="P:cell division"/>
    <property type="evidence" value="ECO:0007669"/>
    <property type="project" value="UniProtKB-UniRule"/>
</dbReference>
<dbReference type="GO" id="GO:0017038">
    <property type="term" value="P:protein import"/>
    <property type="evidence" value="ECO:0007669"/>
    <property type="project" value="InterPro"/>
</dbReference>
<dbReference type="Gene3D" id="2.120.10.30">
    <property type="entry name" value="TolB, C-terminal domain"/>
    <property type="match status" value="1"/>
</dbReference>
<dbReference type="Gene3D" id="3.40.50.10070">
    <property type="entry name" value="TolB, N-terminal domain"/>
    <property type="match status" value="1"/>
</dbReference>
<dbReference type="HAMAP" id="MF_00671">
    <property type="entry name" value="TolB"/>
    <property type="match status" value="1"/>
</dbReference>
<dbReference type="InterPro" id="IPR011042">
    <property type="entry name" value="6-blade_b-propeller_TolB-like"/>
</dbReference>
<dbReference type="InterPro" id="IPR011659">
    <property type="entry name" value="PD40"/>
</dbReference>
<dbReference type="InterPro" id="IPR014167">
    <property type="entry name" value="Tol-Pal_TolB"/>
</dbReference>
<dbReference type="InterPro" id="IPR007195">
    <property type="entry name" value="TolB_N"/>
</dbReference>
<dbReference type="NCBIfam" id="TIGR02800">
    <property type="entry name" value="propeller_TolB"/>
    <property type="match status" value="1"/>
</dbReference>
<dbReference type="PANTHER" id="PTHR36842:SF1">
    <property type="entry name" value="PROTEIN TOLB"/>
    <property type="match status" value="1"/>
</dbReference>
<dbReference type="PANTHER" id="PTHR36842">
    <property type="entry name" value="PROTEIN TOLB HOMOLOG"/>
    <property type="match status" value="1"/>
</dbReference>
<dbReference type="Pfam" id="PF07676">
    <property type="entry name" value="PD40"/>
    <property type="match status" value="5"/>
</dbReference>
<dbReference type="Pfam" id="PF04052">
    <property type="entry name" value="TolB_N"/>
    <property type="match status" value="1"/>
</dbReference>
<dbReference type="SUPFAM" id="SSF52964">
    <property type="entry name" value="TolB, N-terminal domain"/>
    <property type="match status" value="1"/>
</dbReference>
<dbReference type="SUPFAM" id="SSF69304">
    <property type="entry name" value="Tricorn protease N-terminal domain"/>
    <property type="match status" value="1"/>
</dbReference>
<proteinExistence type="inferred from homology"/>
<reference key="1">
    <citation type="submission" date="2008-04" db="EMBL/GenBank/DDBJ databases">
        <title>Complete sequence of chromosome 1 of Burkholderia ambifaria MC40-6.</title>
        <authorList>
            <person name="Copeland A."/>
            <person name="Lucas S."/>
            <person name="Lapidus A."/>
            <person name="Glavina del Rio T."/>
            <person name="Dalin E."/>
            <person name="Tice H."/>
            <person name="Pitluck S."/>
            <person name="Chain P."/>
            <person name="Malfatti S."/>
            <person name="Shin M."/>
            <person name="Vergez L."/>
            <person name="Lang D."/>
            <person name="Schmutz J."/>
            <person name="Larimer F."/>
            <person name="Land M."/>
            <person name="Hauser L."/>
            <person name="Kyrpides N."/>
            <person name="Lykidis A."/>
            <person name="Ramette A."/>
            <person name="Konstantinidis K."/>
            <person name="Tiedje J."/>
            <person name="Richardson P."/>
        </authorList>
    </citation>
    <scope>NUCLEOTIDE SEQUENCE [LARGE SCALE GENOMIC DNA]</scope>
    <source>
        <strain>MC40-6</strain>
    </source>
</reference>